<name>QOX4_BACSH</name>
<evidence type="ECO:0000255" key="1"/>
<evidence type="ECO:0000269" key="2">
    <source>
    </source>
</evidence>
<evidence type="ECO:0000305" key="3"/>
<reference key="1">
    <citation type="journal article" date="2011" name="Microbiology">
        <title>The genome sequence of Bacillus subtilis subsp. spizizenii W23: insights into speciation within the B. subtilis complex and into the history of B. subtilis genetics.</title>
        <authorList>
            <person name="Zeigler D.R."/>
        </authorList>
    </citation>
    <scope>NUCLEOTIDE SEQUENCE [LARGE SCALE GENOMIC DNA]</scope>
    <source>
        <strain>ATCC 23059 / NRRL B-14472 / W23</strain>
    </source>
</reference>
<reference key="2">
    <citation type="journal article" date="1995" name="Arch. Microbiol.">
        <title>Properties of the menaquinol oxidase (Qox) and of qox deletion mutants of Bacillus subtilis.</title>
        <authorList>
            <person name="Lemma E."/>
            <person name="Simon J."/>
            <person name="Schagger H."/>
            <person name="Kroger A."/>
        </authorList>
    </citation>
    <scope>PROTEIN SEQUENCE OF 2-17</scope>
    <scope>CHARACTERIZATION</scope>
    <source>
        <strain>ATCC 23059 / NRRL B-14472 / W23</strain>
    </source>
</reference>
<sequence length="124" mass="13601">MANKSAEHSHFPWKHIVGFALSIVLTLLALWVAVYTDLSSSAKLWIIFGFAFIQAALQLLMFMHMTESENGGIQVGNTLFGFFGAIVIVLGSIWIFAAHYHHGDHMDGNPPGGAEHSEHSGHNE</sequence>
<protein>
    <recommendedName>
        <fullName>Quinol oxidase subunit 4</fullName>
        <ecNumber>1.10.3.-</ecNumber>
    </recommendedName>
    <alternativeName>
        <fullName>Quinol oxidase aa3-600, subunit qoxD</fullName>
    </alternativeName>
    <alternativeName>
        <fullName>Quinol oxidase polypeptide IV</fullName>
    </alternativeName>
</protein>
<accession>E0TW64</accession>
<organism>
    <name type="scientific">Bacillus spizizenii (strain ATCC 23059 / NRRL B-14472 / W23)</name>
    <name type="common">Bacillus subtilis subsp. spizizenii</name>
    <dbReference type="NCBI Taxonomy" id="655816"/>
    <lineage>
        <taxon>Bacteria</taxon>
        <taxon>Bacillati</taxon>
        <taxon>Bacillota</taxon>
        <taxon>Bacilli</taxon>
        <taxon>Bacillales</taxon>
        <taxon>Bacillaceae</taxon>
        <taxon>Bacillus</taxon>
    </lineage>
</organism>
<comment type="function">
    <text>Catalyzes quinol oxidation with the concomitant reduction of oxygen to water. Major component for energy conversion during vegetative growth.</text>
</comment>
<comment type="catalytic activity">
    <reaction>
        <text>2 a quinol + O2 = 2 a quinone + 2 H2O</text>
        <dbReference type="Rhea" id="RHEA:55376"/>
        <dbReference type="ChEBI" id="CHEBI:15377"/>
        <dbReference type="ChEBI" id="CHEBI:15379"/>
        <dbReference type="ChEBI" id="CHEBI:24646"/>
        <dbReference type="ChEBI" id="CHEBI:132124"/>
    </reaction>
</comment>
<comment type="subcellular location">
    <subcellularLocation>
        <location>Cell membrane</location>
        <topology>Multi-pass membrane protein</topology>
    </subcellularLocation>
</comment>
<comment type="similarity">
    <text evidence="3">Belongs to the cytochrome c oxidase bacterial subunit 4 family.</text>
</comment>
<gene>
    <name type="primary">qoxD</name>
    <name type="ordered locus">BSUW23_18860</name>
</gene>
<keyword id="KW-1003">Cell membrane</keyword>
<keyword id="KW-0903">Direct protein sequencing</keyword>
<keyword id="KW-0472">Membrane</keyword>
<keyword id="KW-0560">Oxidoreductase</keyword>
<keyword id="KW-0812">Transmembrane</keyword>
<keyword id="KW-1133">Transmembrane helix</keyword>
<proteinExistence type="evidence at protein level"/>
<dbReference type="EC" id="1.10.3.-"/>
<dbReference type="EMBL" id="CP002183">
    <property type="protein sequence ID" value="ADM39806.1"/>
    <property type="molecule type" value="Genomic_DNA"/>
</dbReference>
<dbReference type="RefSeq" id="WP_003222169.1">
    <property type="nucleotide sequence ID" value="NZ_CP148102.1"/>
</dbReference>
<dbReference type="SMR" id="E0TW64"/>
<dbReference type="GeneID" id="76984492"/>
<dbReference type="KEGG" id="bss:BSUW23_18860"/>
<dbReference type="HOGENOM" id="CLU_140945_2_0_9"/>
<dbReference type="Proteomes" id="UP000002233">
    <property type="component" value="Chromosome"/>
</dbReference>
<dbReference type="GO" id="GO:0009319">
    <property type="term" value="C:cytochrome o ubiquinol oxidase complex"/>
    <property type="evidence" value="ECO:0007669"/>
    <property type="project" value="TreeGrafter"/>
</dbReference>
<dbReference type="GO" id="GO:0005886">
    <property type="term" value="C:plasma membrane"/>
    <property type="evidence" value="ECO:0007669"/>
    <property type="project" value="UniProtKB-SubCell"/>
</dbReference>
<dbReference type="GO" id="GO:0009486">
    <property type="term" value="F:cytochrome bo3 ubiquinol oxidase activity"/>
    <property type="evidence" value="ECO:0007669"/>
    <property type="project" value="TreeGrafter"/>
</dbReference>
<dbReference type="GO" id="GO:0016682">
    <property type="term" value="F:oxidoreductase activity, acting on diphenols and related substances as donors, oxygen as acceptor"/>
    <property type="evidence" value="ECO:0007669"/>
    <property type="project" value="InterPro"/>
</dbReference>
<dbReference type="GO" id="GO:0015078">
    <property type="term" value="F:proton transmembrane transporter activity"/>
    <property type="evidence" value="ECO:0007669"/>
    <property type="project" value="TreeGrafter"/>
</dbReference>
<dbReference type="GO" id="GO:0019646">
    <property type="term" value="P:aerobic electron transport chain"/>
    <property type="evidence" value="ECO:0007669"/>
    <property type="project" value="TreeGrafter"/>
</dbReference>
<dbReference type="GO" id="GO:0042773">
    <property type="term" value="P:ATP synthesis coupled electron transport"/>
    <property type="evidence" value="ECO:0007669"/>
    <property type="project" value="InterPro"/>
</dbReference>
<dbReference type="GO" id="GO:0015990">
    <property type="term" value="P:electron transport coupled proton transport"/>
    <property type="evidence" value="ECO:0007669"/>
    <property type="project" value="TreeGrafter"/>
</dbReference>
<dbReference type="InterPro" id="IPR005171">
    <property type="entry name" value="Cyt_c_oxidase_su4_prok"/>
</dbReference>
<dbReference type="InterPro" id="IPR050968">
    <property type="entry name" value="Cytochrome_c_oxidase_bac_sub4"/>
</dbReference>
<dbReference type="InterPro" id="IPR014250">
    <property type="entry name" value="QoxD"/>
</dbReference>
<dbReference type="NCBIfam" id="TIGR02901">
    <property type="entry name" value="QoxD"/>
    <property type="match status" value="1"/>
</dbReference>
<dbReference type="PANTHER" id="PTHR36835">
    <property type="entry name" value="CYTOCHROME BO(3) UBIQUINOL OXIDASE SUBUNIT 4"/>
    <property type="match status" value="1"/>
</dbReference>
<dbReference type="PANTHER" id="PTHR36835:SF1">
    <property type="entry name" value="CYTOCHROME BO(3) UBIQUINOL OXIDASE SUBUNIT 4"/>
    <property type="match status" value="1"/>
</dbReference>
<dbReference type="Pfam" id="PF03626">
    <property type="entry name" value="COX4_pro"/>
    <property type="match status" value="1"/>
</dbReference>
<feature type="initiator methionine" description="Removed" evidence="2">
    <location>
        <position position="1"/>
    </location>
</feature>
<feature type="chain" id="PRO_0000402832" description="Quinol oxidase subunit 4">
    <location>
        <begin position="2"/>
        <end position="124"/>
    </location>
</feature>
<feature type="transmembrane region" description="Helical" evidence="1">
    <location>
        <begin position="16"/>
        <end position="36"/>
    </location>
</feature>
<feature type="transmembrane region" description="Helical" evidence="1">
    <location>
        <begin position="44"/>
        <end position="64"/>
    </location>
</feature>
<feature type="transmembrane region" description="Helical" evidence="1">
    <location>
        <begin position="78"/>
        <end position="98"/>
    </location>
</feature>